<sequence>MKIRNSPSFHGGSGYSVFRARNLTFKKVVKKVMRDQSNNQFMIQMENMIRRIVREEIQRSLQPFLSSSCVSMERSRSETPSSRSRLKLCFINSPPSSIFTGSKIEAEDGSPLVIELVDATTNTLVSTGPFSSSRVELVPLNADFTEESWTVEGFNRNILTQREGKRPLLTGDLTVMLKNGVGVITGDIAFSDNSSWTRSRKFRLGAKLTGDGAVEARSEAFGCRDQRGESYKKHHPPCPSDEVWRLEKIAKDGVSATRLAERKILTVKDFRRLYTVNRNELHNIIGAGVSKKTWNTIVSHAMDCVLDETECYIYNANTPGVTLLFNSVYELIRVSFNGNDIQNLDQPILDQLKAEAYQNLNRITAVNDRTFVGHPQRSLQCPQDPGFVVTCSGSQHIDFQGSLDPSSSSMALCHKASSSTVHPDVLMSFDNSSTARFHIDKKFLPTFGNSFKVSELDQVHGKSQTVVTKGCIENNEEDENAFSYHHHDDMTSSWSPGTHQAVETMFLTVSETEEAGMFDVHFANVNLGSPRARWCKVKAAFKVRAAFKEVRRHTTARNPREGL</sequence>
<gene>
    <name evidence="9" type="primary">CBP60G</name>
    <name evidence="13" type="ordered locus">At5g26920</name>
    <name evidence="14" type="ORF">F2P16.9</name>
</gene>
<reference key="1">
    <citation type="journal article" date="2000" name="Nature">
        <title>Sequence and analysis of chromosome 5 of the plant Arabidopsis thaliana.</title>
        <authorList>
            <person name="Tabata S."/>
            <person name="Kaneko T."/>
            <person name="Nakamura Y."/>
            <person name="Kotani H."/>
            <person name="Kato T."/>
            <person name="Asamizu E."/>
            <person name="Miyajima N."/>
            <person name="Sasamoto S."/>
            <person name="Kimura T."/>
            <person name="Hosouchi T."/>
            <person name="Kawashima K."/>
            <person name="Kohara M."/>
            <person name="Matsumoto M."/>
            <person name="Matsuno A."/>
            <person name="Muraki A."/>
            <person name="Nakayama S."/>
            <person name="Nakazaki N."/>
            <person name="Naruo K."/>
            <person name="Okumura S."/>
            <person name="Shinpo S."/>
            <person name="Takeuchi C."/>
            <person name="Wada T."/>
            <person name="Watanabe A."/>
            <person name="Yamada M."/>
            <person name="Yasuda M."/>
            <person name="Sato S."/>
            <person name="de la Bastide M."/>
            <person name="Huang E."/>
            <person name="Spiegel L."/>
            <person name="Gnoj L."/>
            <person name="O'Shaughnessy A."/>
            <person name="Preston R."/>
            <person name="Habermann K."/>
            <person name="Murray J."/>
            <person name="Johnson D."/>
            <person name="Rohlfing T."/>
            <person name="Nelson J."/>
            <person name="Stoneking T."/>
            <person name="Pepin K."/>
            <person name="Spieth J."/>
            <person name="Sekhon M."/>
            <person name="Armstrong J."/>
            <person name="Becker M."/>
            <person name="Belter E."/>
            <person name="Cordum H."/>
            <person name="Cordes M."/>
            <person name="Courtney L."/>
            <person name="Courtney W."/>
            <person name="Dante M."/>
            <person name="Du H."/>
            <person name="Edwards J."/>
            <person name="Fryman J."/>
            <person name="Haakensen B."/>
            <person name="Lamar E."/>
            <person name="Latreille P."/>
            <person name="Leonard S."/>
            <person name="Meyer R."/>
            <person name="Mulvaney E."/>
            <person name="Ozersky P."/>
            <person name="Riley A."/>
            <person name="Strowmatt C."/>
            <person name="Wagner-McPherson C."/>
            <person name="Wollam A."/>
            <person name="Yoakum M."/>
            <person name="Bell M."/>
            <person name="Dedhia N."/>
            <person name="Parnell L."/>
            <person name="Shah R."/>
            <person name="Rodriguez M."/>
            <person name="Hoon See L."/>
            <person name="Vil D."/>
            <person name="Baker J."/>
            <person name="Kirchoff K."/>
            <person name="Toth K."/>
            <person name="King L."/>
            <person name="Bahret A."/>
            <person name="Miller B."/>
            <person name="Marra M.A."/>
            <person name="Martienssen R."/>
            <person name="McCombie W.R."/>
            <person name="Wilson R.K."/>
            <person name="Murphy G."/>
            <person name="Bancroft I."/>
            <person name="Volckaert G."/>
            <person name="Wambutt R."/>
            <person name="Duesterhoeft A."/>
            <person name="Stiekema W."/>
            <person name="Pohl T."/>
            <person name="Entian K.-D."/>
            <person name="Terryn N."/>
            <person name="Hartley N."/>
            <person name="Bent E."/>
            <person name="Johnson S."/>
            <person name="Langham S.-A."/>
            <person name="McCullagh B."/>
            <person name="Robben J."/>
            <person name="Grymonprez B."/>
            <person name="Zimmermann W."/>
            <person name="Ramsperger U."/>
            <person name="Wedler H."/>
            <person name="Balke K."/>
            <person name="Wedler E."/>
            <person name="Peters S."/>
            <person name="van Staveren M."/>
            <person name="Dirkse W."/>
            <person name="Mooijman P."/>
            <person name="Klein Lankhorst R."/>
            <person name="Weitzenegger T."/>
            <person name="Bothe G."/>
            <person name="Rose M."/>
            <person name="Hauf J."/>
            <person name="Berneiser S."/>
            <person name="Hempel S."/>
            <person name="Feldpausch M."/>
            <person name="Lamberth S."/>
            <person name="Villarroel R."/>
            <person name="Gielen J."/>
            <person name="Ardiles W."/>
            <person name="Bents O."/>
            <person name="Lemcke K."/>
            <person name="Kolesov G."/>
            <person name="Mayer K.F.X."/>
            <person name="Rudd S."/>
            <person name="Schoof H."/>
            <person name="Schueller C."/>
            <person name="Zaccaria P."/>
            <person name="Mewes H.-W."/>
            <person name="Bevan M."/>
            <person name="Fransz P.F."/>
        </authorList>
    </citation>
    <scope>NUCLEOTIDE SEQUENCE [LARGE SCALE GENOMIC DNA]</scope>
    <source>
        <strain>cv. Columbia</strain>
    </source>
</reference>
<reference key="2">
    <citation type="journal article" date="2017" name="Plant J.">
        <title>Araport11: a complete reannotation of the Arabidopsis thaliana reference genome.</title>
        <authorList>
            <person name="Cheng C.Y."/>
            <person name="Krishnakumar V."/>
            <person name="Chan A.P."/>
            <person name="Thibaud-Nissen F."/>
            <person name="Schobel S."/>
            <person name="Town C.D."/>
        </authorList>
    </citation>
    <scope>GENOME REANNOTATION</scope>
    <source>
        <strain>cv. Columbia</strain>
    </source>
</reference>
<reference key="3">
    <citation type="submission" date="2002-04" db="EMBL/GenBank/DDBJ databases">
        <title>Isolation of pathogen induced calmodulin binding protein in Arabidopsis.</title>
        <authorList>
            <person name="Kang Y.H."/>
            <person name="Kim M.C."/>
            <person name="Kang C.H."/>
            <person name="Koo Y.D."/>
            <person name="Choi M.S."/>
            <person name="Cho M.J."/>
        </authorList>
    </citation>
    <scope>NUCLEOTIDE SEQUENCE [MRNA] OF 4-563 (ISOFORM 1)</scope>
</reference>
<reference key="4">
    <citation type="journal article" date="2002" name="J. Biol. Chem.">
        <title>Genes encoding calmodulin-binding proteins in the Arabidopsis genome.</title>
        <authorList>
            <person name="Reddy V.S."/>
            <person name="Ali G.S."/>
            <person name="Reddy A.S.N."/>
        </authorList>
    </citation>
    <scope>GENE FAMILY</scope>
    <scope>NOMENCLATURE</scope>
</reference>
<reference key="5">
    <citation type="journal article" date="2005" name="Plant Physiol.">
        <title>12-oxo-phytodienoic acid triggers expression of a distinct set of genes and plays a role in wound-induced gene expression in Arabidopsis.</title>
        <authorList>
            <person name="Taki N."/>
            <person name="Sasaki-Sekimoto Y."/>
            <person name="Obayashi T."/>
            <person name="Kikuta A."/>
            <person name="Kobayashi K."/>
            <person name="Ainai T."/>
            <person name="Yagi K."/>
            <person name="Sakurai N."/>
            <person name="Suzuki H."/>
            <person name="Masuda T."/>
            <person name="Takamiya K."/>
            <person name="Shibata D."/>
            <person name="Kobayashi Y."/>
            <person name="Ohta H."/>
        </authorList>
    </citation>
    <scope>INDUCTION BY OPDA</scope>
</reference>
<reference key="6">
    <citation type="journal article" date="2009" name="PLoS Pathog.">
        <title>Arabidopsis CaM binding protein CBP60g contributes to MAMP-induced SA accumulation and is involved in disease resistance against Pseudomonas syringae.</title>
        <authorList>
            <person name="Wang L."/>
            <person name="Tsuda K."/>
            <person name="Sato M."/>
            <person name="Cohen J.D."/>
            <person name="Katagiri F."/>
            <person name="Glazebrook J."/>
        </authorList>
    </citation>
    <scope>FUNCTION</scope>
    <scope>DISRUPTION PHENOTYPE</scope>
    <scope>INDUCTION BY PSEUDOMONAS SYRINGAE AND FLG22</scope>
    <scope>INTERACTION WITH CALMODULIN</scope>
    <scope>MUTAGENESIS OF PHE-25; VAL-28; VAL-29 AND VAL-32</scope>
    <source>
        <strain>cv. Columbia</strain>
    </source>
</reference>
<reference key="7">
    <citation type="journal article" date="2010" name="Proc. Natl. Acad. Sci. U.S.A.">
        <title>Control of salicylic acid synthesis and systemic acquired resistance by two members of a plant-specific family of transcription factors.</title>
        <authorList>
            <person name="Zhang Y."/>
            <person name="Xu S."/>
            <person name="Ding P."/>
            <person name="Wang D."/>
            <person name="Cheng Y.T."/>
            <person name="He J."/>
            <person name="Gao M."/>
            <person name="Xu F."/>
            <person name="Li Y."/>
            <person name="Zhu Z."/>
            <person name="Li X."/>
            <person name="Zhang Y."/>
        </authorList>
    </citation>
    <scope>FUNCTION</scope>
    <scope>DISRUPTION PHENOTYPE</scope>
    <scope>INDUCTION BY PSEUDOMONAS SYRINGAE</scope>
    <scope>INTERACTION WITH CALMODULIN</scope>
    <scope>DNA-BINDING</scope>
</reference>
<reference key="8">
    <citation type="journal article" date="2011" name="Plant J.">
        <title>CBP60g and SARD1 play partially redundant critical roles in salicylic acid signaling.</title>
        <authorList>
            <person name="Wang L."/>
            <person name="Tsuda K."/>
            <person name="Truman W."/>
            <person name="Sato M."/>
            <person name="Nguyen L.V."/>
            <person name="Katagiri F."/>
            <person name="Glazebrook J."/>
        </authorList>
    </citation>
    <scope>FUNCTION</scope>
    <scope>DISRUPTION PHENOTYPE</scope>
    <scope>INTERACTION WITH CALMODULIN</scope>
    <source>
        <strain>cv. Columbia</strain>
    </source>
</reference>
<reference key="9">
    <citation type="journal article" date="2012" name="BMC Plant Biol.">
        <title>Co-expression analysis identifies putative targets for CBP60g and SARD1 regulation.</title>
        <authorList>
            <person name="Truman W."/>
            <person name="Glazebrook J."/>
        </authorList>
    </citation>
    <scope>FUNCTION IN TRANSCRIPTION REGULATION</scope>
    <scope>INDUCTION BY FLG22</scope>
</reference>
<reference key="10">
    <citation type="journal article" date="2012" name="Plant Cell Rep.">
        <title>Calmodulin-binding protein CBP60g is a positive regulator of both disease resistance and drought tolerance in Arabidopsis.</title>
        <authorList>
            <person name="Wan D."/>
            <person name="Li R."/>
            <person name="Zou B."/>
            <person name="Zhang X."/>
            <person name="Cong J."/>
            <person name="Wang R."/>
            <person name="Xia Y."/>
            <person name="Li G."/>
        </authorList>
    </citation>
    <scope>FUNCTION</scope>
    <scope>DISRUPTION PHENOTYPE</scope>
    <scope>TISSUE SPECIFICITY</scope>
    <scope>DEVELOPMENTAL STAGE</scope>
    <scope>SUBCELLULAR LOCATION</scope>
    <source>
        <strain>cv. Columbia</strain>
    </source>
</reference>
<reference key="11">
    <citation type="journal article" date="2013" name="Mol. Plant">
        <title>Arabidopsis ROP1 and ROP6 influence germination time, root morphology, the formation of F-actin bundles, and symbiotic fungal interactions.</title>
        <authorList>
            <person name="Venus Y."/>
            <person name="Oelmueller R."/>
        </authorList>
    </citation>
    <scope>INDUCTION BY PIRIFORMOSPORA INDICA</scope>
</reference>
<reference key="12">
    <citation type="journal article" date="2018" name="Elife">
        <title>The plant-specific transcription factors CBP60g and SARD1 are targeted by a Verticillium secretory protein VdSCP41 to modulate immunity.</title>
        <authorList>
            <person name="Qin J."/>
            <person name="Wang K."/>
            <person name="Sun L."/>
            <person name="Xing H."/>
            <person name="Wang S."/>
            <person name="Li L."/>
            <person name="Chen S."/>
            <person name="Guo H.S."/>
            <person name="Zhang J."/>
        </authorList>
    </citation>
    <scope>FUNCTION</scope>
    <scope>INTERACTION WITH V.DAHLIAE SCP41</scope>
</reference>
<dbReference type="EMBL" id="AF007270">
    <property type="status" value="NOT_ANNOTATED_CDS"/>
    <property type="molecule type" value="Genomic_DNA"/>
</dbReference>
<dbReference type="EMBL" id="CP002688">
    <property type="protein sequence ID" value="AED93626.1"/>
    <property type="molecule type" value="Genomic_DNA"/>
</dbReference>
<dbReference type="EMBL" id="CP002688">
    <property type="protein sequence ID" value="AED93627.1"/>
    <property type="molecule type" value="Genomic_DNA"/>
</dbReference>
<dbReference type="EMBL" id="AY095443">
    <property type="protein sequence ID" value="AAM23317.1"/>
    <property type="status" value="ALT_INIT"/>
    <property type="molecule type" value="mRNA"/>
</dbReference>
<dbReference type="RefSeq" id="NP_001190408.1">
    <molecule id="F4K2R6-2"/>
    <property type="nucleotide sequence ID" value="NM_001203479.1"/>
</dbReference>
<dbReference type="RefSeq" id="NP_198044.2">
    <molecule id="F4K2R6-1"/>
    <property type="nucleotide sequence ID" value="NM_122574.4"/>
</dbReference>
<dbReference type="SMR" id="F4K2R6"/>
<dbReference type="FunCoup" id="F4K2R6">
    <property type="interactions" value="10"/>
</dbReference>
<dbReference type="STRING" id="3702.F4K2R6"/>
<dbReference type="PaxDb" id="3702-AT5G26920.1"/>
<dbReference type="ProteomicsDB" id="239128">
    <molecule id="F4K2R6-1"/>
</dbReference>
<dbReference type="EnsemblPlants" id="AT5G26920.1">
    <molecule id="F4K2R6-1"/>
    <property type="protein sequence ID" value="AT5G26920.1"/>
    <property type="gene ID" value="AT5G26920"/>
</dbReference>
<dbReference type="EnsemblPlants" id="AT5G26920.2">
    <molecule id="F4K2R6-2"/>
    <property type="protein sequence ID" value="AT5G26920.2"/>
    <property type="gene ID" value="AT5G26920"/>
</dbReference>
<dbReference type="GeneID" id="832750"/>
<dbReference type="Gramene" id="AT5G26920.1">
    <molecule id="F4K2R6-1"/>
    <property type="protein sequence ID" value="AT5G26920.1"/>
    <property type="gene ID" value="AT5G26920"/>
</dbReference>
<dbReference type="Gramene" id="AT5G26920.2">
    <molecule id="F4K2R6-2"/>
    <property type="protein sequence ID" value="AT5G26920.2"/>
    <property type="gene ID" value="AT5G26920"/>
</dbReference>
<dbReference type="KEGG" id="ath:AT5G26920"/>
<dbReference type="Araport" id="AT5G26920"/>
<dbReference type="TAIR" id="AT5G26920">
    <property type="gene designation" value="CBP60G"/>
</dbReference>
<dbReference type="eggNOG" id="ENOG502QWE3">
    <property type="taxonomic scope" value="Eukaryota"/>
</dbReference>
<dbReference type="InParanoid" id="F4K2R6"/>
<dbReference type="PhylomeDB" id="F4K2R6"/>
<dbReference type="PRO" id="PR:F4K2R6"/>
<dbReference type="Proteomes" id="UP000006548">
    <property type="component" value="Chromosome 5"/>
</dbReference>
<dbReference type="ExpressionAtlas" id="F4K2R6">
    <property type="expression patterns" value="baseline and differential"/>
</dbReference>
<dbReference type="GO" id="GO:0005634">
    <property type="term" value="C:nucleus"/>
    <property type="evidence" value="ECO:0000314"/>
    <property type="project" value="UniProtKB"/>
</dbReference>
<dbReference type="GO" id="GO:0005516">
    <property type="term" value="F:calmodulin binding"/>
    <property type="evidence" value="ECO:0000314"/>
    <property type="project" value="UniProtKB"/>
</dbReference>
<dbReference type="GO" id="GO:0003700">
    <property type="term" value="F:DNA-binding transcription factor activity"/>
    <property type="evidence" value="ECO:0000314"/>
    <property type="project" value="UniProtKB"/>
</dbReference>
<dbReference type="GO" id="GO:0043565">
    <property type="term" value="F:sequence-specific DNA binding"/>
    <property type="evidence" value="ECO:0000314"/>
    <property type="project" value="UniProtKB"/>
</dbReference>
<dbReference type="GO" id="GO:0009738">
    <property type="term" value="P:abscisic acid-activated signaling pathway"/>
    <property type="evidence" value="ECO:0007669"/>
    <property type="project" value="UniProtKB-KW"/>
</dbReference>
<dbReference type="GO" id="GO:0071456">
    <property type="term" value="P:cellular response to hypoxia"/>
    <property type="evidence" value="ECO:0000270"/>
    <property type="project" value="TAIR"/>
</dbReference>
<dbReference type="GO" id="GO:0071219">
    <property type="term" value="P:cellular response to molecule of bacterial origin"/>
    <property type="evidence" value="ECO:0000314"/>
    <property type="project" value="UniProtKB"/>
</dbReference>
<dbReference type="GO" id="GO:0042742">
    <property type="term" value="P:defense response to bacterium"/>
    <property type="evidence" value="ECO:0000315"/>
    <property type="project" value="UniProtKB"/>
</dbReference>
<dbReference type="GO" id="GO:0002229">
    <property type="term" value="P:defense response to oomycetes"/>
    <property type="evidence" value="ECO:0000315"/>
    <property type="project" value="UniProtKB"/>
</dbReference>
<dbReference type="GO" id="GO:0009626">
    <property type="term" value="P:plant-type hypersensitive response"/>
    <property type="evidence" value="ECO:0007669"/>
    <property type="project" value="UniProtKB-KW"/>
</dbReference>
<dbReference type="GO" id="GO:0009789">
    <property type="term" value="P:positive regulation of abscisic acid-activated signaling pathway"/>
    <property type="evidence" value="ECO:0000315"/>
    <property type="project" value="UniProtKB"/>
</dbReference>
<dbReference type="GO" id="GO:1902584">
    <property type="term" value="P:positive regulation of response to water deprivation"/>
    <property type="evidence" value="ECO:0000315"/>
    <property type="project" value="UniProtKB"/>
</dbReference>
<dbReference type="GO" id="GO:0006355">
    <property type="term" value="P:regulation of DNA-templated transcription"/>
    <property type="evidence" value="ECO:0000315"/>
    <property type="project" value="UniProtKB"/>
</dbReference>
<dbReference type="GO" id="GO:0080142">
    <property type="term" value="P:regulation of salicylic acid biosynthetic process"/>
    <property type="evidence" value="ECO:0000315"/>
    <property type="project" value="UniProtKB"/>
</dbReference>
<dbReference type="GO" id="GO:0010112">
    <property type="term" value="P:regulation of systemic acquired resistance"/>
    <property type="evidence" value="ECO:0000316"/>
    <property type="project" value="TAIR"/>
</dbReference>
<dbReference type="GO" id="GO:0009617">
    <property type="term" value="P:response to bacterium"/>
    <property type="evidence" value="ECO:0000314"/>
    <property type="project" value="UniProtKB"/>
</dbReference>
<dbReference type="GO" id="GO:0009620">
    <property type="term" value="P:response to fungus"/>
    <property type="evidence" value="ECO:0000270"/>
    <property type="project" value="UniProtKB"/>
</dbReference>
<dbReference type="GO" id="GO:0002237">
    <property type="term" value="P:response to molecule of bacterial origin"/>
    <property type="evidence" value="ECO:0000270"/>
    <property type="project" value="TAIR"/>
</dbReference>
<dbReference type="GO" id="GO:0010224">
    <property type="term" value="P:response to UV-B"/>
    <property type="evidence" value="ECO:0000314"/>
    <property type="project" value="UniProtKB"/>
</dbReference>
<dbReference type="GO" id="GO:0009697">
    <property type="term" value="P:salicylic acid biosynthetic process"/>
    <property type="evidence" value="ECO:0000315"/>
    <property type="project" value="TAIR"/>
</dbReference>
<dbReference type="InterPro" id="IPR046829">
    <property type="entry name" value="Calmod_bind_C"/>
</dbReference>
<dbReference type="InterPro" id="IPR046830">
    <property type="entry name" value="Calmod_bind_M"/>
</dbReference>
<dbReference type="InterPro" id="IPR046831">
    <property type="entry name" value="Calmodulin_bind_N"/>
</dbReference>
<dbReference type="InterPro" id="IPR012416">
    <property type="entry name" value="CBP60"/>
</dbReference>
<dbReference type="PANTHER" id="PTHR31713:SF43">
    <property type="entry name" value="CALMODULIN-BINDING PROTEIN 60 G"/>
    <property type="match status" value="1"/>
</dbReference>
<dbReference type="PANTHER" id="PTHR31713">
    <property type="entry name" value="OS02G0177800 PROTEIN"/>
    <property type="match status" value="1"/>
</dbReference>
<dbReference type="Pfam" id="PF20452">
    <property type="entry name" value="Calmod_bind_C"/>
    <property type="match status" value="1"/>
</dbReference>
<dbReference type="Pfam" id="PF20451">
    <property type="entry name" value="Calmod_bind_M"/>
    <property type="match status" value="1"/>
</dbReference>
<dbReference type="Pfam" id="PF07887">
    <property type="entry name" value="Calmodulin_bind"/>
    <property type="match status" value="1"/>
</dbReference>
<accession>F4K2R6</accession>
<accession>F4K2R7</accession>
<accession>Q2VYG1</accession>
<feature type="chain" id="PRO_0000433051" description="Calmodulin-binding protein 60 G">
    <location>
        <begin position="1"/>
        <end position="563"/>
    </location>
</feature>
<feature type="region of interest" description="Calmodulin-binding" evidence="2 3">
    <location>
        <begin position="1"/>
        <end position="76"/>
    </location>
</feature>
<feature type="region of interest" description="DNA-binding" evidence="10">
    <location>
        <begin position="147"/>
        <end position="263"/>
    </location>
</feature>
<feature type="splice variant" id="VSP_057667" description="In isoform 2.">
    <location>
        <begin position="276"/>
        <end position="283"/>
    </location>
</feature>
<feature type="mutagenesis site" description="Impaired calmodulin-binding." evidence="2">
    <original>F</original>
    <variation>K</variation>
    <location>
        <position position="25"/>
    </location>
</feature>
<feature type="mutagenesis site" description="Impaired calmodulin-binding and reduced resistance to Pseudomonas syringae associated with loss of salicylic acid (SA) accumulation." evidence="2">
    <original>V</original>
    <variation>K</variation>
    <location>
        <position position="28"/>
    </location>
</feature>
<feature type="mutagenesis site" description="Impaired calmodulin-binding and reduced resistance to Pseudomonas syringae associated with loss of salicylic acid (SA) accumulation." evidence="2">
    <original>V</original>
    <variation>R</variation>
    <location>
        <position position="29"/>
    </location>
</feature>
<feature type="mutagenesis site" description="Impaired calmodulin-binding." evidence="2">
    <original>V</original>
    <variation>K</variation>
    <location>
        <position position="32"/>
    </location>
</feature>
<name>CB60G_ARATH</name>
<keyword id="KW-0938">Abscisic acid signaling pathway</keyword>
<keyword id="KW-0010">Activator</keyword>
<keyword id="KW-0025">Alternative splicing</keyword>
<keyword id="KW-0112">Calmodulin-binding</keyword>
<keyword id="KW-0238">DNA-binding</keyword>
<keyword id="KW-0381">Hypersensitive response</keyword>
<keyword id="KW-0539">Nucleus</keyword>
<keyword id="KW-0611">Plant defense</keyword>
<keyword id="KW-1185">Reference proteome</keyword>
<keyword id="KW-0804">Transcription</keyword>
<keyword id="KW-0805">Transcription regulation</keyword>
<organism evidence="15">
    <name type="scientific">Arabidopsis thaliana</name>
    <name type="common">Mouse-ear cress</name>
    <dbReference type="NCBI Taxonomy" id="3702"/>
    <lineage>
        <taxon>Eukaryota</taxon>
        <taxon>Viridiplantae</taxon>
        <taxon>Streptophyta</taxon>
        <taxon>Embryophyta</taxon>
        <taxon>Tracheophyta</taxon>
        <taxon>Spermatophyta</taxon>
        <taxon>Magnoliopsida</taxon>
        <taxon>eudicotyledons</taxon>
        <taxon>Gunneridae</taxon>
        <taxon>Pentapetalae</taxon>
        <taxon>rosids</taxon>
        <taxon>malvids</taxon>
        <taxon>Brassicales</taxon>
        <taxon>Brassicaceae</taxon>
        <taxon>Camelineae</taxon>
        <taxon>Arabidopsis</taxon>
    </lineage>
</organism>
<protein>
    <recommendedName>
        <fullName evidence="9">Calmodulin-binding protein 60 G</fullName>
    </recommendedName>
</protein>
<proteinExistence type="evidence at protein level"/>
<evidence type="ECO:0000269" key="1">
    <source>
    </source>
</evidence>
<evidence type="ECO:0000269" key="2">
    <source>
    </source>
</evidence>
<evidence type="ECO:0000269" key="3">
    <source>
    </source>
</evidence>
<evidence type="ECO:0000269" key="4">
    <source>
    </source>
</evidence>
<evidence type="ECO:0000269" key="5">
    <source>
    </source>
</evidence>
<evidence type="ECO:0000269" key="6">
    <source>
    </source>
</evidence>
<evidence type="ECO:0000269" key="7">
    <source>
    </source>
</evidence>
<evidence type="ECO:0000269" key="8">
    <source>
    </source>
</evidence>
<evidence type="ECO:0000303" key="9">
    <source>
    </source>
</evidence>
<evidence type="ECO:0000303" key="10">
    <source>
    </source>
</evidence>
<evidence type="ECO:0000305" key="11"/>
<evidence type="ECO:0000305" key="12">
    <source>
    </source>
</evidence>
<evidence type="ECO:0000312" key="13">
    <source>
        <dbReference type="Araport" id="AT5G26920"/>
    </source>
</evidence>
<evidence type="ECO:0000312" key="14">
    <source>
        <dbReference type="EMBL" id="AF007270"/>
    </source>
</evidence>
<evidence type="ECO:0000312" key="15">
    <source>
        <dbReference type="Proteomes" id="UP000006548"/>
    </source>
</evidence>
<comment type="function">
    <text evidence="2 3 4 5 7 8">Transcription activator that binds DNA in a sequence-specific manner, 5'-GAAATTTTGG-3', to promote the expression of target genes (PubMed:20921422, PubMed:21615571, PubMed:23153277, PubMed:29757140). Recruited to the promoter of ICS1 and other defense-related genes (e.g. PR1, PR2 and EDS5) in response to both biotic (e.g. Pseudomonas syringae pv. maculicola ES4326, P.syringae pv. tomato DC3000, and microbe-associated molecular patterns (MAMPs) such as flg22) and abiotic stresses (e.g. UV-B, drought and abscisic acid), thus triggering rapid defense responses by stimulating salicylic acid (SA) biosynthesis. Involved in basal and systemic acquired resistance to P.syringae and Hyaloperonospora arabidopsidis (PubMed:19214217, PubMed:20921422, PubMed:21615571, PubMed:22466450). Mediates resistance to drought and sensitivity to abscisic acid (ABA), especially for ABA-mediated signaling process that regulates early seedling growth (PubMed:22466450).</text>
</comment>
<comment type="subunit">
    <text evidence="2 3 4">Interacts with calmodulin (CaM) in the presence of calcium ions; this interaction is required for defense responses.</text>
</comment>
<comment type="subunit">
    <text evidence="8">(Microbial infection) Interacts with V.dahliae SCP41; the interaction is direct and inhibits CBP60G.</text>
</comment>
<comment type="subcellular location">
    <subcellularLocation>
        <location evidence="5">Nucleus</location>
    </subcellularLocation>
</comment>
<comment type="alternative products">
    <event type="alternative splicing"/>
    <isoform>
        <id>F4K2R6-1</id>
        <name>1</name>
        <sequence type="displayed"/>
    </isoform>
    <isoform>
        <id>F4K2R6-2</id>
        <name>2</name>
        <sequence type="described" ref="VSP_057667"/>
    </isoform>
</comment>
<comment type="tissue specificity">
    <text evidence="5">Expressed in seedlings, roots, leaves, inflorescences and flowers, and, to a lower extent, in siliques. Particularly present in guard cells.</text>
</comment>
<comment type="developmental stage">
    <text evidence="5">In seedlings, present in roots, except in tips, leaves and petioles. In inflorescence and flowers, accumulates in sepals, carpels (e.g. styles and floral nectars) and stamens (e.g. filaments and vascular tissue of anthers), but not in petals or stigma.</text>
</comment>
<comment type="induction">
    <text evidence="1 2 3 6 7">Induced rapidly by pathogenic bacteria Pseudomonas syringae pv. maculicola ES4326 and P.syringae pv. tomato DC3000, by the root-colonizing endophytic plant growth-promoting fungus Piriformospora indica, and by microbe-associated molecular patterns (MAMPs) such as flg22 and hrcC in both local and systemic leaves in both local and systemic leaves (PubMed:19214217, PubMed:20921422, PubMed:23118477, PubMed:23153277). Accumulates transiently in response to 12-oxo-phytodienoic acid (OPDA) (PubMed:16258017).</text>
</comment>
<comment type="disruption phenotype">
    <text evidence="2 3 4 5">Reduced basal resistance to Pseudomonas syringae pv. maculicola ES4326 and P.syringae pv. tomato DC3000. Impaired systemic acquired resistance (SAR) induced by P.syringae toward Hyaloperonospora arabidopsidis Noco2. Plants lacking both SARD1 and CBP60G fail to accumulate salicylic acid (SA) and to express PR1 and SID2 upon both biotic and abiotic stresses.</text>
</comment>
<comment type="similarity">
    <text evidence="12">Belongs to the plant ACBP60 protein family.</text>
</comment>
<comment type="sequence caution" evidence="11">
    <conflict type="erroneous initiation">
        <sequence resource="EMBL-CDS" id="AAM23317"/>
    </conflict>
    <text>Truncated N-terminus.</text>
</comment>